<feature type="chain" id="PRO_1000213603" description="16S rRNA aminocarboxypropyltransferase">
    <location>
        <begin position="1"/>
        <end position="166"/>
    </location>
</feature>
<feature type="binding site" evidence="1 2">
    <location>
        <position position="17"/>
    </location>
    <ligand>
        <name>S-adenosyl-L-methionine</name>
        <dbReference type="ChEBI" id="CHEBI:59789"/>
    </ligand>
</feature>
<feature type="binding site" evidence="1 2">
    <location>
        <position position="62"/>
    </location>
    <ligand>
        <name>S-adenosyl-L-methionine</name>
        <dbReference type="ChEBI" id="CHEBI:59789"/>
    </ligand>
</feature>
<feature type="binding site" evidence="1 2">
    <location>
        <position position="84"/>
    </location>
    <ligand>
        <name>S-adenosyl-L-methionine</name>
        <dbReference type="ChEBI" id="CHEBI:59789"/>
    </ligand>
</feature>
<feature type="binding site" evidence="1 2">
    <location>
        <position position="99"/>
    </location>
    <ligand>
        <name>S-adenosyl-L-methionine</name>
        <dbReference type="ChEBI" id="CHEBI:59789"/>
    </ligand>
</feature>
<feature type="binding site" evidence="2">
    <location>
        <position position="103"/>
    </location>
    <ligand>
        <name>S-adenosyl-L-methionine</name>
        <dbReference type="ChEBI" id="CHEBI:59789"/>
    </ligand>
</feature>
<gene>
    <name type="ordered locus">YN1551_1255</name>
</gene>
<organism>
    <name type="scientific">Saccharolobus islandicus (strain Y.N.15.51 / Yellowstone #2)</name>
    <name type="common">Sulfolobus islandicus</name>
    <dbReference type="NCBI Taxonomy" id="419942"/>
    <lineage>
        <taxon>Archaea</taxon>
        <taxon>Thermoproteota</taxon>
        <taxon>Thermoprotei</taxon>
        <taxon>Sulfolobales</taxon>
        <taxon>Sulfolobaceae</taxon>
        <taxon>Saccharolobus</taxon>
    </lineage>
</organism>
<name>TSR3_SACI1</name>
<comment type="function">
    <text evidence="2">Aminocarboxypropyltransferase that catalyzes the aminocarboxypropyl transfer on pseudouridine corresponding to position 914 in M.jannaschii 16S rRNA. It constitutes the last step in biosynthesis of the hypermodified N1-methyl-N3-(3-amino-3-carboxypropyl) pseudouridine (m1acp3-Psi).</text>
</comment>
<comment type="catalytic activity">
    <reaction evidence="2">
        <text>an N(1)-methylpseudouridine in rRNA + S-adenosyl-L-methionine = N(1)-methyl-N(3)-[(3S)-3-amino-3-carboxypropyl]pseudouridine in rRNA + S-methyl-5'-thioadenosine + H(+)</text>
        <dbReference type="Rhea" id="RHEA:63296"/>
        <dbReference type="Rhea" id="RHEA-COMP:11634"/>
        <dbReference type="Rhea" id="RHEA-COMP:16310"/>
        <dbReference type="ChEBI" id="CHEBI:15378"/>
        <dbReference type="ChEBI" id="CHEBI:17509"/>
        <dbReference type="ChEBI" id="CHEBI:59789"/>
        <dbReference type="ChEBI" id="CHEBI:74890"/>
        <dbReference type="ChEBI" id="CHEBI:146234"/>
        <dbReference type="EC" id="2.5.1.157"/>
    </reaction>
</comment>
<comment type="subcellular location">
    <subcellularLocation>
        <location evidence="2">Cytoplasm</location>
    </subcellularLocation>
</comment>
<comment type="similarity">
    <text evidence="2">Belongs to the TDD superfamily. TSR3 family.</text>
</comment>
<reference key="1">
    <citation type="journal article" date="2009" name="Proc. Natl. Acad. Sci. U.S.A.">
        <title>Biogeography of the Sulfolobus islandicus pan-genome.</title>
        <authorList>
            <person name="Reno M.L."/>
            <person name="Held N.L."/>
            <person name="Fields C.J."/>
            <person name="Burke P.V."/>
            <person name="Whitaker R.J."/>
        </authorList>
    </citation>
    <scope>NUCLEOTIDE SEQUENCE [LARGE SCALE GENOMIC DNA]</scope>
    <source>
        <strain>Y.N.15.51 / Yellowstone #2</strain>
    </source>
</reference>
<keyword id="KW-0963">Cytoplasm</keyword>
<keyword id="KW-0690">Ribosome biogenesis</keyword>
<keyword id="KW-0698">rRNA processing</keyword>
<keyword id="KW-0949">S-adenosyl-L-methionine</keyword>
<keyword id="KW-0808">Transferase</keyword>
<dbReference type="EC" id="2.5.1.157" evidence="2"/>
<dbReference type="EMBL" id="CP001404">
    <property type="protein sequence ID" value="ACP48350.1"/>
    <property type="molecule type" value="Genomic_DNA"/>
</dbReference>
<dbReference type="RefSeq" id="WP_012711570.1">
    <property type="nucleotide sequence ID" value="NC_012623.1"/>
</dbReference>
<dbReference type="SMR" id="C3NGU0"/>
<dbReference type="KEGG" id="sin:YN1551_1255"/>
<dbReference type="HOGENOM" id="CLU_035060_4_1_2"/>
<dbReference type="Proteomes" id="UP000006818">
    <property type="component" value="Chromosome"/>
</dbReference>
<dbReference type="GO" id="GO:0005737">
    <property type="term" value="C:cytoplasm"/>
    <property type="evidence" value="ECO:0007669"/>
    <property type="project" value="UniProtKB-SubCell"/>
</dbReference>
<dbReference type="GO" id="GO:0106388">
    <property type="term" value="F:18S rRNA aminocarboxypropyltransferase activity"/>
    <property type="evidence" value="ECO:0007669"/>
    <property type="project" value="InterPro"/>
</dbReference>
<dbReference type="GO" id="GO:1904047">
    <property type="term" value="F:S-adenosyl-L-methionine binding"/>
    <property type="evidence" value="ECO:0007669"/>
    <property type="project" value="UniProtKB-UniRule"/>
</dbReference>
<dbReference type="GO" id="GO:0000455">
    <property type="term" value="P:enzyme-directed rRNA pseudouridine synthesis"/>
    <property type="evidence" value="ECO:0007669"/>
    <property type="project" value="UniProtKB-UniRule"/>
</dbReference>
<dbReference type="HAMAP" id="MF_01116">
    <property type="entry name" value="TSR3"/>
    <property type="match status" value="1"/>
</dbReference>
<dbReference type="InterPro" id="IPR007209">
    <property type="entry name" value="RNaseL-inhib-like_metal-bd_dom"/>
</dbReference>
<dbReference type="InterPro" id="IPR022968">
    <property type="entry name" value="Tsr3-like"/>
</dbReference>
<dbReference type="InterPro" id="IPR007177">
    <property type="entry name" value="Tsr3_C"/>
</dbReference>
<dbReference type="NCBIfam" id="NF002621">
    <property type="entry name" value="PRK02287.1"/>
    <property type="match status" value="1"/>
</dbReference>
<dbReference type="PANTHER" id="PTHR20426:SF0">
    <property type="entry name" value="18S RRNA AMINOCARBOXYPROPYLTRANSFERASE"/>
    <property type="match status" value="1"/>
</dbReference>
<dbReference type="PANTHER" id="PTHR20426">
    <property type="entry name" value="RIBOSOME BIOGENESIS PROTEIN TSR3 HOMOLOG"/>
    <property type="match status" value="1"/>
</dbReference>
<dbReference type="Pfam" id="PF04068">
    <property type="entry name" value="Fer4_RLI"/>
    <property type="match status" value="1"/>
</dbReference>
<dbReference type="Pfam" id="PF04034">
    <property type="entry name" value="Ribo_biogen_C"/>
    <property type="match status" value="1"/>
</dbReference>
<evidence type="ECO:0000250" key="1">
    <source>
        <dbReference type="UniProtKB" id="E1QU22"/>
    </source>
</evidence>
<evidence type="ECO:0000255" key="2">
    <source>
        <dbReference type="HAMAP-Rule" id="MF_01116"/>
    </source>
</evidence>
<evidence type="ECO:0000305" key="3"/>
<sequence>MKVYVIDYHKDDPKKCTGRKLVKLKLAELTRVGRGIILNPFSERTLSINDKDILIKSGITIIDTSWNNTSQNEFKNVRGEHRRLPILFAGNPIHYGIAYKLSSLEALMATLYILDEVKEAIKFSNVVKWGHTFIELNKELLEAYRNKDEEEIKKIEKEIIEKILRK</sequence>
<accession>C3NGU0</accession>
<proteinExistence type="inferred from homology"/>
<protein>
    <recommendedName>
        <fullName evidence="2 3">16S rRNA aminocarboxypropyltransferase</fullName>
        <ecNumber evidence="2">2.5.1.157</ecNumber>
    </recommendedName>
</protein>